<keyword id="KW-0067">ATP-binding</keyword>
<keyword id="KW-1070">Brassinosteroid signaling pathway</keyword>
<keyword id="KW-1003">Cell membrane</keyword>
<keyword id="KW-0418">Kinase</keyword>
<keyword id="KW-0449">Lipoprotein</keyword>
<keyword id="KW-0472">Membrane</keyword>
<keyword id="KW-0519">Myristate</keyword>
<keyword id="KW-0547">Nucleotide-binding</keyword>
<keyword id="KW-1185">Reference proteome</keyword>
<keyword id="KW-0723">Serine/threonine-protein kinase</keyword>
<keyword id="KW-0808">Transferase</keyword>
<comment type="function">
    <text evidence="4">Probable serine/threonine kinase that acts as a positive regulator of brassinosteroid (BR) signaling downstream of the receptor kinase BRI1. Mediates signal transduction from BRI1 by functioning as substrate of BRI1.</text>
</comment>
<comment type="catalytic activity">
    <reaction evidence="6">
        <text>L-seryl-[protein] + ATP = O-phospho-L-seryl-[protein] + ADP + H(+)</text>
        <dbReference type="Rhea" id="RHEA:17989"/>
        <dbReference type="Rhea" id="RHEA-COMP:9863"/>
        <dbReference type="Rhea" id="RHEA-COMP:11604"/>
        <dbReference type="ChEBI" id="CHEBI:15378"/>
        <dbReference type="ChEBI" id="CHEBI:29999"/>
        <dbReference type="ChEBI" id="CHEBI:30616"/>
        <dbReference type="ChEBI" id="CHEBI:83421"/>
        <dbReference type="ChEBI" id="CHEBI:456216"/>
        <dbReference type="EC" id="2.7.11.1"/>
    </reaction>
</comment>
<comment type="catalytic activity">
    <reaction evidence="6">
        <text>L-threonyl-[protein] + ATP = O-phospho-L-threonyl-[protein] + ADP + H(+)</text>
        <dbReference type="Rhea" id="RHEA:46608"/>
        <dbReference type="Rhea" id="RHEA-COMP:11060"/>
        <dbReference type="Rhea" id="RHEA-COMP:11605"/>
        <dbReference type="ChEBI" id="CHEBI:15378"/>
        <dbReference type="ChEBI" id="CHEBI:30013"/>
        <dbReference type="ChEBI" id="CHEBI:30616"/>
        <dbReference type="ChEBI" id="CHEBI:61977"/>
        <dbReference type="ChEBI" id="CHEBI:456216"/>
        <dbReference type="EC" id="2.7.11.1"/>
    </reaction>
</comment>
<comment type="subcellular location">
    <subcellularLocation>
        <location evidence="4">Cell membrane</location>
        <topology evidence="7">Lipid-anchor</topology>
    </subcellularLocation>
</comment>
<comment type="PTM">
    <text evidence="4">Phosphorylated by BRI1 upon brassinolide (BL) treatment.</text>
</comment>
<comment type="similarity">
    <text evidence="6">Belongs to the protein kinase superfamily. Ser/Thr protein kinase family.</text>
</comment>
<organism>
    <name type="scientific">Arabidopsis thaliana</name>
    <name type="common">Mouse-ear cress</name>
    <dbReference type="NCBI Taxonomy" id="3702"/>
    <lineage>
        <taxon>Eukaryota</taxon>
        <taxon>Viridiplantae</taxon>
        <taxon>Streptophyta</taxon>
        <taxon>Embryophyta</taxon>
        <taxon>Tracheophyta</taxon>
        <taxon>Spermatophyta</taxon>
        <taxon>Magnoliopsida</taxon>
        <taxon>eudicotyledons</taxon>
        <taxon>Gunneridae</taxon>
        <taxon>Pentapetalae</taxon>
        <taxon>rosids</taxon>
        <taxon>malvids</taxon>
        <taxon>Brassicales</taxon>
        <taxon>Brassicaceae</taxon>
        <taxon>Camelineae</taxon>
        <taxon>Arabidopsis</taxon>
    </lineage>
</organism>
<evidence type="ECO:0000255" key="1">
    <source>
        <dbReference type="PROSITE-ProRule" id="PRU00159"/>
    </source>
</evidence>
<evidence type="ECO:0000256" key="2">
    <source>
        <dbReference type="SAM" id="MobiDB-lite"/>
    </source>
</evidence>
<evidence type="ECO:0000269" key="3">
    <source>
    </source>
</evidence>
<evidence type="ECO:0000269" key="4">
    <source>
    </source>
</evidence>
<evidence type="ECO:0000303" key="5">
    <source>
    </source>
</evidence>
<evidence type="ECO:0000305" key="6"/>
<evidence type="ECO:0000305" key="7">
    <source>
    </source>
</evidence>
<evidence type="ECO:0000312" key="8">
    <source>
        <dbReference type="Araport" id="AT5G46570"/>
    </source>
</evidence>
<evidence type="ECO:0000312" key="9">
    <source>
        <dbReference type="EMBL" id="BAA97528.1"/>
    </source>
</evidence>
<proteinExistence type="evidence at protein level"/>
<dbReference type="EC" id="2.7.11.1" evidence="6"/>
<dbReference type="EMBL" id="AB028605">
    <property type="protein sequence ID" value="BAA97528.1"/>
    <property type="molecule type" value="Genomic_DNA"/>
</dbReference>
<dbReference type="EMBL" id="CP002688">
    <property type="protein sequence ID" value="AED95399.1"/>
    <property type="molecule type" value="Genomic_DNA"/>
</dbReference>
<dbReference type="EMBL" id="BT003996">
    <property type="protein sequence ID" value="AAO42035.1"/>
    <property type="molecule type" value="mRNA"/>
</dbReference>
<dbReference type="EMBL" id="BT015774">
    <property type="protein sequence ID" value="AAU90064.1"/>
    <property type="molecule type" value="mRNA"/>
</dbReference>
<dbReference type="RefSeq" id="NP_199469.1">
    <property type="nucleotide sequence ID" value="NM_124027.3"/>
</dbReference>
<dbReference type="SMR" id="Q9LS26"/>
<dbReference type="FunCoup" id="Q9LS26">
    <property type="interactions" value="2208"/>
</dbReference>
<dbReference type="IntAct" id="Q9LS26">
    <property type="interactions" value="2"/>
</dbReference>
<dbReference type="STRING" id="3702.Q9LS26"/>
<dbReference type="iPTMnet" id="Q9LS26"/>
<dbReference type="PaxDb" id="3702-AT5G46570.1"/>
<dbReference type="ProteomicsDB" id="240507"/>
<dbReference type="EnsemblPlants" id="AT5G46570.1">
    <property type="protein sequence ID" value="AT5G46570.1"/>
    <property type="gene ID" value="AT5G46570"/>
</dbReference>
<dbReference type="GeneID" id="834700"/>
<dbReference type="Gramene" id="AT5G46570.1">
    <property type="protein sequence ID" value="AT5G46570.1"/>
    <property type="gene ID" value="AT5G46570"/>
</dbReference>
<dbReference type="KEGG" id="ath:AT5G46570"/>
<dbReference type="Araport" id="AT5G46570"/>
<dbReference type="TAIR" id="AT5G46570">
    <property type="gene designation" value="BSK2"/>
</dbReference>
<dbReference type="eggNOG" id="ENOG502QS12">
    <property type="taxonomic scope" value="Eukaryota"/>
</dbReference>
<dbReference type="HOGENOM" id="CLU_000288_15_0_1"/>
<dbReference type="InParanoid" id="Q9LS26"/>
<dbReference type="OMA" id="CSMENRK"/>
<dbReference type="OrthoDB" id="1905385at2759"/>
<dbReference type="PhylomeDB" id="Q9LS26"/>
<dbReference type="PRO" id="PR:Q9LS26"/>
<dbReference type="Proteomes" id="UP000006548">
    <property type="component" value="Chromosome 5"/>
</dbReference>
<dbReference type="ExpressionAtlas" id="Q9LS26">
    <property type="expression patterns" value="baseline and differential"/>
</dbReference>
<dbReference type="GO" id="GO:0005886">
    <property type="term" value="C:plasma membrane"/>
    <property type="evidence" value="ECO:0000314"/>
    <property type="project" value="TAIR"/>
</dbReference>
<dbReference type="GO" id="GO:0005524">
    <property type="term" value="F:ATP binding"/>
    <property type="evidence" value="ECO:0007669"/>
    <property type="project" value="UniProtKB-KW"/>
</dbReference>
<dbReference type="GO" id="GO:0106310">
    <property type="term" value="F:protein serine kinase activity"/>
    <property type="evidence" value="ECO:0007669"/>
    <property type="project" value="RHEA"/>
</dbReference>
<dbReference type="GO" id="GO:0004674">
    <property type="term" value="F:protein serine/threonine kinase activity"/>
    <property type="evidence" value="ECO:0007669"/>
    <property type="project" value="UniProtKB-KW"/>
</dbReference>
<dbReference type="GO" id="GO:0009742">
    <property type="term" value="P:brassinosteroid mediated signaling pathway"/>
    <property type="evidence" value="ECO:0000314"/>
    <property type="project" value="TAIR"/>
</dbReference>
<dbReference type="FunFam" id="1.25.40.10:FF:000016">
    <property type="entry name" value="probable serine/threonine-protein kinase At4g35230"/>
    <property type="match status" value="1"/>
</dbReference>
<dbReference type="FunFam" id="3.30.200.20:FF:000154">
    <property type="entry name" value="probable serine/threonine-protein kinase At4g35230"/>
    <property type="match status" value="1"/>
</dbReference>
<dbReference type="FunFam" id="1.10.510.10:FF:000069">
    <property type="entry name" value="probable serine/threonine-protein kinase At5g41260"/>
    <property type="match status" value="1"/>
</dbReference>
<dbReference type="Gene3D" id="3.30.200.20">
    <property type="entry name" value="Phosphorylase Kinase, domain 1"/>
    <property type="match status" value="1"/>
</dbReference>
<dbReference type="Gene3D" id="1.25.40.10">
    <property type="entry name" value="Tetratricopeptide repeat domain"/>
    <property type="match status" value="1"/>
</dbReference>
<dbReference type="Gene3D" id="1.10.510.10">
    <property type="entry name" value="Transferase(Phosphotransferase) domain 1"/>
    <property type="match status" value="1"/>
</dbReference>
<dbReference type="InterPro" id="IPR045845">
    <property type="entry name" value="BSK"/>
</dbReference>
<dbReference type="InterPro" id="IPR011009">
    <property type="entry name" value="Kinase-like_dom_sf"/>
</dbReference>
<dbReference type="InterPro" id="IPR000719">
    <property type="entry name" value="Prot_kinase_dom"/>
</dbReference>
<dbReference type="InterPro" id="IPR011990">
    <property type="entry name" value="TPR-like_helical_dom_sf"/>
</dbReference>
<dbReference type="PANTHER" id="PTHR45863">
    <property type="entry name" value="SERINE/THREONINE-PROTEIN KINASE BSK5"/>
    <property type="match status" value="1"/>
</dbReference>
<dbReference type="PANTHER" id="PTHR45863:SF15">
    <property type="entry name" value="SERINE_THREONINE-PROTEIN KINASE BSK2"/>
    <property type="match status" value="1"/>
</dbReference>
<dbReference type="Pfam" id="PF00069">
    <property type="entry name" value="Pkinase"/>
    <property type="match status" value="1"/>
</dbReference>
<dbReference type="SUPFAM" id="SSF56112">
    <property type="entry name" value="Protein kinase-like (PK-like)"/>
    <property type="match status" value="1"/>
</dbReference>
<dbReference type="SUPFAM" id="SSF48452">
    <property type="entry name" value="TPR-like"/>
    <property type="match status" value="1"/>
</dbReference>
<dbReference type="PROSITE" id="PS50011">
    <property type="entry name" value="PROTEIN_KINASE_DOM"/>
    <property type="match status" value="1"/>
</dbReference>
<sequence length="489" mass="54973">MGCLHSKTANLPSSDDPSAPNKPESVNGDQVDQEIQNFKEFELNELRKATNGFSPSCIVSEGGEKAPNVVYRGKLEGNHLVAIKRFSRQSWPDAQQFVVEATGVGKLRNKRIVSLIGCCAEGDERLLVAEYMPNDTLSKHLFHWEKQPLPWDMRVRIADYIAEALDYCNIENRKIYHDLNAYRILFDEEGDPRLSTFGLMKNSRDGKSYSTNLAYTPPEFLRTGRVIPESVIFSYGTILLDLLSGKHIPPSHALDIIRGKNALLLMDSSLEGQYANDDATKLVDLASKCLQSEAKDRPDTKFLLSAVAPLQKQEEVASHVLMGLPKNTVILPTMLSPLGKACAKMDLATFHDILLKTGYRDEEGAENELSFQEWTQQVQEMLNTKKFGDIAFRDKDFKNSIEYYSKLVGMMPVPSATVFARRAFSYLMTDQQELALRDAMQAQVCIPEWPTAFYLQALALSKLGMETDAQDMLNDGAAYDAKRQNSWRC</sequence>
<accession>Q9LS26</accession>
<accession>Q84WC2</accession>
<protein>
    <recommendedName>
        <fullName evidence="6">Serine/threonine-protein kinase BSK2</fullName>
        <ecNumber evidence="6">2.7.11.1</ecNumber>
    </recommendedName>
    <alternativeName>
        <fullName evidence="5">Brassinosteroid-signaling kinase 2</fullName>
    </alternativeName>
</protein>
<feature type="initiator methionine" description="Removed" evidence="3">
    <location>
        <position position="1"/>
    </location>
</feature>
<feature type="chain" id="PRO_0000443232" description="Serine/threonine-protein kinase BSK2">
    <location>
        <begin position="2"/>
        <end position="489"/>
    </location>
</feature>
<feature type="domain" description="Protein kinase" evidence="1">
    <location>
        <begin position="56"/>
        <end position="322"/>
    </location>
</feature>
<feature type="region of interest" description="Disordered" evidence="2">
    <location>
        <begin position="1"/>
        <end position="30"/>
    </location>
</feature>
<feature type="compositionally biased region" description="Polar residues" evidence="2">
    <location>
        <begin position="7"/>
        <end position="16"/>
    </location>
</feature>
<feature type="active site" description="Proton acceptor" evidence="1">
    <location>
        <position position="178"/>
    </location>
</feature>
<feature type="binding site" evidence="1">
    <location>
        <begin position="62"/>
        <end position="70"/>
    </location>
    <ligand>
        <name>ATP</name>
        <dbReference type="ChEBI" id="CHEBI:30616"/>
    </ligand>
</feature>
<feature type="binding site" evidence="1">
    <location>
        <position position="84"/>
    </location>
    <ligand>
        <name>ATP</name>
        <dbReference type="ChEBI" id="CHEBI:30616"/>
    </ligand>
</feature>
<feature type="lipid moiety-binding region" description="N-myristoyl glycine" evidence="3">
    <location>
        <position position="2"/>
    </location>
</feature>
<feature type="sequence conflict" description="In Ref. 3; AAO42035." evidence="6" ref="3">
    <original>S</original>
    <variation>F</variation>
    <location>
        <position position="87"/>
    </location>
</feature>
<gene>
    <name evidence="5" type="primary">BSK2</name>
    <name evidence="8" type="ordered locus">At5g46570</name>
    <name evidence="9" type="ORF">F10E10.4</name>
</gene>
<reference key="1">
    <citation type="submission" date="1999-06" db="EMBL/GenBank/DDBJ databases">
        <title>Structural analysis of Arabidopsis thaliana chromosome 5. XI.</title>
        <authorList>
            <person name="Kaneko T."/>
            <person name="Katoh T."/>
            <person name="Asamizu E."/>
            <person name="Sato S."/>
            <person name="Nakamura Y."/>
            <person name="Kotani H."/>
            <person name="Tabata S."/>
        </authorList>
    </citation>
    <scope>NUCLEOTIDE SEQUENCE [LARGE SCALE GENOMIC DNA]</scope>
    <source>
        <strain>cv. Columbia</strain>
    </source>
</reference>
<reference key="2">
    <citation type="journal article" date="2017" name="Plant J.">
        <title>Araport11: a complete reannotation of the Arabidopsis thaliana reference genome.</title>
        <authorList>
            <person name="Cheng C.Y."/>
            <person name="Krishnakumar V."/>
            <person name="Chan A.P."/>
            <person name="Thibaud-Nissen F."/>
            <person name="Schobel S."/>
            <person name="Town C.D."/>
        </authorList>
    </citation>
    <scope>GENOME REANNOTATION</scope>
    <source>
        <strain>cv. Columbia</strain>
    </source>
</reference>
<reference key="3">
    <citation type="journal article" date="2003" name="Science">
        <title>Empirical analysis of transcriptional activity in the Arabidopsis genome.</title>
        <authorList>
            <person name="Yamada K."/>
            <person name="Lim J."/>
            <person name="Dale J.M."/>
            <person name="Chen H."/>
            <person name="Shinn P."/>
            <person name="Palm C.J."/>
            <person name="Southwick A.M."/>
            <person name="Wu H.C."/>
            <person name="Kim C.J."/>
            <person name="Nguyen M."/>
            <person name="Pham P.K."/>
            <person name="Cheuk R.F."/>
            <person name="Karlin-Newmann G."/>
            <person name="Liu S.X."/>
            <person name="Lam B."/>
            <person name="Sakano H."/>
            <person name="Wu T."/>
            <person name="Yu G."/>
            <person name="Miranda M."/>
            <person name="Quach H.L."/>
            <person name="Tripp M."/>
            <person name="Chang C.H."/>
            <person name="Lee J.M."/>
            <person name="Toriumi M.J."/>
            <person name="Chan M.M."/>
            <person name="Tang C.C."/>
            <person name="Onodera C.S."/>
            <person name="Deng J.M."/>
            <person name="Akiyama K."/>
            <person name="Ansari Y."/>
            <person name="Arakawa T."/>
            <person name="Banh J."/>
            <person name="Banno F."/>
            <person name="Bowser L."/>
            <person name="Brooks S.Y."/>
            <person name="Carninci P."/>
            <person name="Chao Q."/>
            <person name="Choy N."/>
            <person name="Enju A."/>
            <person name="Goldsmith A.D."/>
            <person name="Gurjal M."/>
            <person name="Hansen N.F."/>
            <person name="Hayashizaki Y."/>
            <person name="Johnson-Hopson C."/>
            <person name="Hsuan V.W."/>
            <person name="Iida K."/>
            <person name="Karnes M."/>
            <person name="Khan S."/>
            <person name="Koesema E."/>
            <person name="Ishida J."/>
            <person name="Jiang P.X."/>
            <person name="Jones T."/>
            <person name="Kawai J."/>
            <person name="Kamiya A."/>
            <person name="Meyers C."/>
            <person name="Nakajima M."/>
            <person name="Narusaka M."/>
            <person name="Seki M."/>
            <person name="Sakurai T."/>
            <person name="Satou M."/>
            <person name="Tamse R."/>
            <person name="Vaysberg M."/>
            <person name="Wallender E.K."/>
            <person name="Wong C."/>
            <person name="Yamamura Y."/>
            <person name="Yuan S."/>
            <person name="Shinozaki K."/>
            <person name="Davis R.W."/>
            <person name="Theologis A."/>
            <person name="Ecker J.R."/>
        </authorList>
    </citation>
    <scope>NUCLEOTIDE SEQUENCE [LARGE SCALE MRNA]</scope>
    <source>
        <strain>cv. Columbia</strain>
    </source>
</reference>
<reference key="4">
    <citation type="submission" date="2004-10" db="EMBL/GenBank/DDBJ databases">
        <title>Arabidopsis ORF clones.</title>
        <authorList>
            <person name="Shinn P."/>
            <person name="Chen H."/>
            <person name="Cheuk R.F."/>
            <person name="Kim C.J."/>
            <person name="Ecker J.R."/>
        </authorList>
    </citation>
    <scope>NUCLEOTIDE SEQUENCE [LARGE SCALE MRNA]</scope>
    <source>
        <strain>cv. Columbia</strain>
    </source>
</reference>
<reference key="5">
    <citation type="journal article" date="2003" name="J. Biol. Chem.">
        <title>Unexpected protein families including cell defense components feature in the N-myristoylome of a higher eukaryote.</title>
        <authorList>
            <person name="Boisson B."/>
            <person name="Giglione C."/>
            <person name="Meinnel T."/>
        </authorList>
    </citation>
    <scope>MYRISTOYLATION AT GLY-2</scope>
</reference>
<reference key="6">
    <citation type="journal article" date="2008" name="Science">
        <title>BSKs mediate signal transduction from the receptor kinase BRI1 in Arabidopsis.</title>
        <authorList>
            <person name="Tang W."/>
            <person name="Kim T.W."/>
            <person name="Oses-Prieto J.A."/>
            <person name="Sun Y."/>
            <person name="Deng Z."/>
            <person name="Zhu S."/>
            <person name="Wang R."/>
            <person name="Burlingame A.L."/>
            <person name="Wang Z.Y."/>
        </authorList>
    </citation>
    <scope>IDENTIFICATION BY MASS SPECTROMETRY</scope>
    <scope>FUNCTION</scope>
    <scope>SUBCELLULAR LOCATION</scope>
    <scope>PHOSPHORYLATION</scope>
</reference>
<name>BSK2_ARATH</name>